<name>HIS4_NEIMB</name>
<accession>Q9K0H3</accession>
<reference key="1">
    <citation type="journal article" date="2000" name="Science">
        <title>Complete genome sequence of Neisseria meningitidis serogroup B strain MC58.</title>
        <authorList>
            <person name="Tettelin H."/>
            <person name="Saunders N.J."/>
            <person name="Heidelberg J.F."/>
            <person name="Jeffries A.C."/>
            <person name="Nelson K.E."/>
            <person name="Eisen J.A."/>
            <person name="Ketchum K.A."/>
            <person name="Hood D.W."/>
            <person name="Peden J.F."/>
            <person name="Dodson R.J."/>
            <person name="Nelson W.C."/>
            <person name="Gwinn M.L."/>
            <person name="DeBoy R.T."/>
            <person name="Peterson J.D."/>
            <person name="Hickey E.K."/>
            <person name="Haft D.H."/>
            <person name="Salzberg S.L."/>
            <person name="White O."/>
            <person name="Fleischmann R.D."/>
            <person name="Dougherty B.A."/>
            <person name="Mason T.M."/>
            <person name="Ciecko A."/>
            <person name="Parksey D.S."/>
            <person name="Blair E."/>
            <person name="Cittone H."/>
            <person name="Clark E.B."/>
            <person name="Cotton M.D."/>
            <person name="Utterback T.R."/>
            <person name="Khouri H.M."/>
            <person name="Qin H."/>
            <person name="Vamathevan J.J."/>
            <person name="Gill J."/>
            <person name="Scarlato V."/>
            <person name="Masignani V."/>
            <person name="Pizza M."/>
            <person name="Grandi G."/>
            <person name="Sun L."/>
            <person name="Smith H.O."/>
            <person name="Fraser C.M."/>
            <person name="Moxon E.R."/>
            <person name="Rappuoli R."/>
            <person name="Venter J.C."/>
        </authorList>
    </citation>
    <scope>NUCLEOTIDE SEQUENCE [LARGE SCALE GENOMIC DNA]</scope>
    <source>
        <strain>ATCC BAA-335 / MC58</strain>
    </source>
</reference>
<keyword id="KW-0028">Amino-acid biosynthesis</keyword>
<keyword id="KW-0963">Cytoplasm</keyword>
<keyword id="KW-0368">Histidine biosynthesis</keyword>
<keyword id="KW-0413">Isomerase</keyword>
<keyword id="KW-1185">Reference proteome</keyword>
<comment type="catalytic activity">
    <reaction>
        <text>1-(5-phospho-beta-D-ribosyl)-5-[(5-phospho-beta-D-ribosylamino)methylideneamino]imidazole-4-carboxamide = 5-[(5-phospho-1-deoxy-D-ribulos-1-ylimino)methylamino]-1-(5-phospho-beta-D-ribosyl)imidazole-4-carboxamide</text>
        <dbReference type="Rhea" id="RHEA:15469"/>
        <dbReference type="ChEBI" id="CHEBI:58435"/>
        <dbReference type="ChEBI" id="CHEBI:58525"/>
        <dbReference type="EC" id="5.3.1.16"/>
    </reaction>
</comment>
<comment type="pathway">
    <text>Amino-acid biosynthesis; L-histidine biosynthesis; L-histidine from 5-phospho-alpha-D-ribose 1-diphosphate: step 4/9.</text>
</comment>
<comment type="subcellular location">
    <subcellularLocation>
        <location evidence="1">Cytoplasm</location>
    </subcellularLocation>
</comment>
<comment type="similarity">
    <text evidence="2">Belongs to the HisA/HisF family.</text>
</comment>
<proteinExistence type="inferred from homology"/>
<feature type="chain" id="PRO_0000142026" description="1-(5-phosphoribosyl)-5-[(5-phosphoribosylamino)methylideneamino] imidazole-4-carboxamide isomerase">
    <location>
        <begin position="1"/>
        <end position="245"/>
    </location>
</feature>
<feature type="active site" description="Proton acceptor" evidence="1">
    <location>
        <position position="8"/>
    </location>
</feature>
<feature type="active site" description="Proton donor" evidence="1">
    <location>
        <position position="131"/>
    </location>
</feature>
<gene>
    <name type="primary">hisA</name>
    <name type="ordered locus">NMB0629</name>
</gene>
<organism>
    <name type="scientific">Neisseria meningitidis serogroup B (strain ATCC BAA-335 / MC58)</name>
    <dbReference type="NCBI Taxonomy" id="122586"/>
    <lineage>
        <taxon>Bacteria</taxon>
        <taxon>Pseudomonadati</taxon>
        <taxon>Pseudomonadota</taxon>
        <taxon>Betaproteobacteria</taxon>
        <taxon>Neisseriales</taxon>
        <taxon>Neisseriaceae</taxon>
        <taxon>Neisseria</taxon>
    </lineage>
</organism>
<protein>
    <recommendedName>
        <fullName>1-(5-phosphoribosyl)-5-[(5-phosphoribosylamino)methylideneamino] imidazole-4-carboxamide isomerase</fullName>
        <ecNumber>5.3.1.16</ecNumber>
    </recommendedName>
    <alternativeName>
        <fullName>Phosphoribosylformimino-5-aminoimidazole carboxamide ribotide isomerase</fullName>
    </alternativeName>
</protein>
<evidence type="ECO:0000250" key="1"/>
<evidence type="ECO:0000305" key="2"/>
<dbReference type="EC" id="5.3.1.16"/>
<dbReference type="EMBL" id="AE002098">
    <property type="protein sequence ID" value="AAF41054.1"/>
    <property type="molecule type" value="Genomic_DNA"/>
</dbReference>
<dbReference type="PIR" id="A81177">
    <property type="entry name" value="A81177"/>
</dbReference>
<dbReference type="RefSeq" id="NP_273672.1">
    <property type="nucleotide sequence ID" value="NC_003112.2"/>
</dbReference>
<dbReference type="RefSeq" id="WP_010980820.1">
    <property type="nucleotide sequence ID" value="NC_003112.2"/>
</dbReference>
<dbReference type="SMR" id="Q9K0H3"/>
<dbReference type="FunCoup" id="Q9K0H3">
    <property type="interactions" value="436"/>
</dbReference>
<dbReference type="STRING" id="122586.NMB0629"/>
<dbReference type="PaxDb" id="122586-NMB0629"/>
<dbReference type="KEGG" id="nme:NMB0629"/>
<dbReference type="PATRIC" id="fig|122586.8.peg.797"/>
<dbReference type="HOGENOM" id="CLU_048577_1_1_4"/>
<dbReference type="InParanoid" id="Q9K0H3"/>
<dbReference type="OrthoDB" id="9807749at2"/>
<dbReference type="UniPathway" id="UPA00031">
    <property type="reaction ID" value="UER00009"/>
</dbReference>
<dbReference type="Proteomes" id="UP000000425">
    <property type="component" value="Chromosome"/>
</dbReference>
<dbReference type="GO" id="GO:0005737">
    <property type="term" value="C:cytoplasm"/>
    <property type="evidence" value="ECO:0000318"/>
    <property type="project" value="GO_Central"/>
</dbReference>
<dbReference type="GO" id="GO:0003949">
    <property type="term" value="F:1-(5-phosphoribosyl)-5-[(5-phosphoribosylamino)methylideneamino]imidazole-4-carboxamide isomerase activity"/>
    <property type="evidence" value="ECO:0000318"/>
    <property type="project" value="GO_Central"/>
</dbReference>
<dbReference type="GO" id="GO:0000105">
    <property type="term" value="P:L-histidine biosynthetic process"/>
    <property type="evidence" value="ECO:0000318"/>
    <property type="project" value="GO_Central"/>
</dbReference>
<dbReference type="CDD" id="cd04732">
    <property type="entry name" value="HisA"/>
    <property type="match status" value="1"/>
</dbReference>
<dbReference type="FunFam" id="3.20.20.70:FF:000009">
    <property type="entry name" value="1-(5-phosphoribosyl)-5-[(5-phosphoribosylamino)methylideneamino] imidazole-4-carboxamide isomerase"/>
    <property type="match status" value="1"/>
</dbReference>
<dbReference type="Gene3D" id="3.20.20.70">
    <property type="entry name" value="Aldolase class I"/>
    <property type="match status" value="1"/>
</dbReference>
<dbReference type="HAMAP" id="MF_01014">
    <property type="entry name" value="HisA"/>
    <property type="match status" value="1"/>
</dbReference>
<dbReference type="InterPro" id="IPR013785">
    <property type="entry name" value="Aldolase_TIM"/>
</dbReference>
<dbReference type="InterPro" id="IPR006062">
    <property type="entry name" value="His_biosynth"/>
</dbReference>
<dbReference type="InterPro" id="IPR006063">
    <property type="entry name" value="HisA_bact_arch"/>
</dbReference>
<dbReference type="InterPro" id="IPR044524">
    <property type="entry name" value="Isoase_HisA-like"/>
</dbReference>
<dbReference type="InterPro" id="IPR023016">
    <property type="entry name" value="Isoase_HisA-like_bact"/>
</dbReference>
<dbReference type="InterPro" id="IPR011060">
    <property type="entry name" value="RibuloseP-bd_barrel"/>
</dbReference>
<dbReference type="NCBIfam" id="TIGR00007">
    <property type="entry name" value="1-(5-phosphoribosyl)-5-[(5-phosphoribosylamino)methylideneamino]imidazole-4-carboxamide isomerase"/>
    <property type="match status" value="1"/>
</dbReference>
<dbReference type="PANTHER" id="PTHR43090">
    <property type="entry name" value="1-(5-PHOSPHORIBOSYL)-5-[(5-PHOSPHORIBOSYLAMINO)METHYLIDENEAMINO] IMIDAZOLE-4-CARBOXAMIDE ISOMERASE"/>
    <property type="match status" value="1"/>
</dbReference>
<dbReference type="PANTHER" id="PTHR43090:SF2">
    <property type="entry name" value="1-(5-PHOSPHORIBOSYL)-5-[(5-PHOSPHORIBOSYLAMINO)METHYLIDENEAMINO] IMIDAZOLE-4-CARBOXAMIDE ISOMERASE"/>
    <property type="match status" value="1"/>
</dbReference>
<dbReference type="Pfam" id="PF00977">
    <property type="entry name" value="His_biosynth"/>
    <property type="match status" value="1"/>
</dbReference>
<dbReference type="SUPFAM" id="SSF51366">
    <property type="entry name" value="Ribulose-phoshate binding barrel"/>
    <property type="match status" value="1"/>
</dbReference>
<sequence length="245" mass="25924">MLLIPAIDLKEGRCVRLKQGLMEEATVFSDSPAETALHWFKQGARRLHLVDLNGAFAGVPQNLPAIKDILAAVAKDIPVQLGGGIRDLKTIGQYLDLGLNDVIIGTAAVKNPDFVREACKAFPGRIIVGLDAKDGMAAIDGWATVTGHHVIDLAKRFEDDGVNSIIYTDIGRDGMMSGVNIDATVKLAQTVRIPVISSGGLTGLDDIRALCAAEKHGVAGAITGRAIYEGSIDFAQAQQLADSLD</sequence>